<comment type="function">
    <text evidence="1">Catalyzes the formation of 4-diphosphocytidyl-2-C-methyl-D-erythritol from CTP and 2-C-methyl-D-erythritol 4-phosphate (MEP).</text>
</comment>
<comment type="catalytic activity">
    <reaction evidence="1">
        <text>2-C-methyl-D-erythritol 4-phosphate + CTP + H(+) = 4-CDP-2-C-methyl-D-erythritol + diphosphate</text>
        <dbReference type="Rhea" id="RHEA:13429"/>
        <dbReference type="ChEBI" id="CHEBI:15378"/>
        <dbReference type="ChEBI" id="CHEBI:33019"/>
        <dbReference type="ChEBI" id="CHEBI:37563"/>
        <dbReference type="ChEBI" id="CHEBI:57823"/>
        <dbReference type="ChEBI" id="CHEBI:58262"/>
        <dbReference type="EC" id="2.7.7.60"/>
    </reaction>
</comment>
<comment type="pathway">
    <text evidence="1">Isoprenoid biosynthesis; isopentenyl diphosphate biosynthesis via DXP pathway; isopentenyl diphosphate from 1-deoxy-D-xylulose 5-phosphate: step 2/6.</text>
</comment>
<comment type="subunit">
    <text evidence="1">Homodimer.</text>
</comment>
<comment type="similarity">
    <text evidence="1">Belongs to the IspD/TarI cytidylyltransferase family. IspD subfamily.</text>
</comment>
<dbReference type="EC" id="2.7.7.60" evidence="1"/>
<dbReference type="EMBL" id="CP000948">
    <property type="protein sequence ID" value="ACB03864.1"/>
    <property type="molecule type" value="Genomic_DNA"/>
</dbReference>
<dbReference type="RefSeq" id="WP_000246138.1">
    <property type="nucleotide sequence ID" value="NC_010473.1"/>
</dbReference>
<dbReference type="SMR" id="B1XCS3"/>
<dbReference type="GeneID" id="93779259"/>
<dbReference type="KEGG" id="ecd:ECDH10B_2915"/>
<dbReference type="HOGENOM" id="CLU_061281_3_1_6"/>
<dbReference type="UniPathway" id="UPA00056">
    <property type="reaction ID" value="UER00093"/>
</dbReference>
<dbReference type="GO" id="GO:0050518">
    <property type="term" value="F:2-C-methyl-D-erythritol 4-phosphate cytidylyltransferase activity"/>
    <property type="evidence" value="ECO:0007669"/>
    <property type="project" value="UniProtKB-UniRule"/>
</dbReference>
<dbReference type="GO" id="GO:0019288">
    <property type="term" value="P:isopentenyl diphosphate biosynthetic process, methylerythritol 4-phosphate pathway"/>
    <property type="evidence" value="ECO:0007669"/>
    <property type="project" value="UniProtKB-UniRule"/>
</dbReference>
<dbReference type="CDD" id="cd02516">
    <property type="entry name" value="CDP-ME_synthetase"/>
    <property type="match status" value="1"/>
</dbReference>
<dbReference type="FunFam" id="3.90.550.10:FF:000003">
    <property type="entry name" value="2-C-methyl-D-erythritol 4-phosphate cytidylyltransferase"/>
    <property type="match status" value="1"/>
</dbReference>
<dbReference type="Gene3D" id="3.90.550.10">
    <property type="entry name" value="Spore Coat Polysaccharide Biosynthesis Protein SpsA, Chain A"/>
    <property type="match status" value="1"/>
</dbReference>
<dbReference type="HAMAP" id="MF_00108">
    <property type="entry name" value="IspD"/>
    <property type="match status" value="1"/>
</dbReference>
<dbReference type="InterPro" id="IPR001228">
    <property type="entry name" value="IspD"/>
</dbReference>
<dbReference type="InterPro" id="IPR034683">
    <property type="entry name" value="IspD/TarI"/>
</dbReference>
<dbReference type="InterPro" id="IPR050088">
    <property type="entry name" value="IspD/TarI_cytidylyltransf_bact"/>
</dbReference>
<dbReference type="InterPro" id="IPR018294">
    <property type="entry name" value="ISPD_synthase_CS"/>
</dbReference>
<dbReference type="InterPro" id="IPR029044">
    <property type="entry name" value="Nucleotide-diphossugar_trans"/>
</dbReference>
<dbReference type="NCBIfam" id="TIGR00453">
    <property type="entry name" value="ispD"/>
    <property type="match status" value="1"/>
</dbReference>
<dbReference type="PANTHER" id="PTHR32125">
    <property type="entry name" value="2-C-METHYL-D-ERYTHRITOL 4-PHOSPHATE CYTIDYLYLTRANSFERASE, CHLOROPLASTIC"/>
    <property type="match status" value="1"/>
</dbReference>
<dbReference type="PANTHER" id="PTHR32125:SF4">
    <property type="entry name" value="2-C-METHYL-D-ERYTHRITOL 4-PHOSPHATE CYTIDYLYLTRANSFERASE, CHLOROPLASTIC"/>
    <property type="match status" value="1"/>
</dbReference>
<dbReference type="Pfam" id="PF01128">
    <property type="entry name" value="IspD"/>
    <property type="match status" value="1"/>
</dbReference>
<dbReference type="SUPFAM" id="SSF53448">
    <property type="entry name" value="Nucleotide-diphospho-sugar transferases"/>
    <property type="match status" value="1"/>
</dbReference>
<dbReference type="PROSITE" id="PS01295">
    <property type="entry name" value="ISPD"/>
    <property type="match status" value="1"/>
</dbReference>
<accession>B1XCS3</accession>
<feature type="chain" id="PRO_1000094328" description="2-C-methyl-D-erythritol 4-phosphate cytidylyltransferase">
    <location>
        <begin position="1"/>
        <end position="236"/>
    </location>
</feature>
<feature type="site" description="Transition state stabilizer" evidence="1">
    <location>
        <position position="20"/>
    </location>
</feature>
<feature type="site" description="Transition state stabilizer" evidence="1">
    <location>
        <position position="27"/>
    </location>
</feature>
<feature type="site" description="Positions MEP for the nucleophilic attack" evidence="1">
    <location>
        <position position="157"/>
    </location>
</feature>
<feature type="site" description="Positions MEP for the nucleophilic attack" evidence="1">
    <location>
        <position position="213"/>
    </location>
</feature>
<protein>
    <recommendedName>
        <fullName evidence="1">2-C-methyl-D-erythritol 4-phosphate cytidylyltransferase</fullName>
        <ecNumber evidence="1">2.7.7.60</ecNumber>
    </recommendedName>
    <alternativeName>
        <fullName evidence="1">4-diphosphocytidyl-2C-methyl-D-erythritol synthase</fullName>
    </alternativeName>
    <alternativeName>
        <fullName evidence="1">MEP cytidylyltransferase</fullName>
        <shortName evidence="1">MCT</shortName>
    </alternativeName>
</protein>
<proteinExistence type="inferred from homology"/>
<sequence length="236" mass="25737">MATTHLDVCAVVPAAGFGRRMQTECPKQYLSIGNQTILEHSVHALLAHPRVKRVVIAISPGDSRFAQLPLANHPQITVVDGGDERADSVLAGLKAAGDAQWVLVHDAARPCLHQDDLARLLALSETSRTGGILAAPVRDTMKRAEPGKNAIAHTVDRNGLWHALTPQFFPRELLHDCLTRALNEGATITDEASALEYCGFHPQLVEGRADNIKVTRPEDLALAEFYLTRTIHQENT</sequence>
<name>ISPD_ECODH</name>
<gene>
    <name evidence="1" type="primary">ispD</name>
    <name type="ordered locus">ECDH10B_2915</name>
</gene>
<organism>
    <name type="scientific">Escherichia coli (strain K12 / DH10B)</name>
    <dbReference type="NCBI Taxonomy" id="316385"/>
    <lineage>
        <taxon>Bacteria</taxon>
        <taxon>Pseudomonadati</taxon>
        <taxon>Pseudomonadota</taxon>
        <taxon>Gammaproteobacteria</taxon>
        <taxon>Enterobacterales</taxon>
        <taxon>Enterobacteriaceae</taxon>
        <taxon>Escherichia</taxon>
    </lineage>
</organism>
<keyword id="KW-0414">Isoprene biosynthesis</keyword>
<keyword id="KW-0548">Nucleotidyltransferase</keyword>
<keyword id="KW-0808">Transferase</keyword>
<reference key="1">
    <citation type="journal article" date="2008" name="J. Bacteriol.">
        <title>The complete genome sequence of Escherichia coli DH10B: insights into the biology of a laboratory workhorse.</title>
        <authorList>
            <person name="Durfee T."/>
            <person name="Nelson R."/>
            <person name="Baldwin S."/>
            <person name="Plunkett G. III"/>
            <person name="Burland V."/>
            <person name="Mau B."/>
            <person name="Petrosino J.F."/>
            <person name="Qin X."/>
            <person name="Muzny D.M."/>
            <person name="Ayele M."/>
            <person name="Gibbs R.A."/>
            <person name="Csorgo B."/>
            <person name="Posfai G."/>
            <person name="Weinstock G.M."/>
            <person name="Blattner F.R."/>
        </authorList>
    </citation>
    <scope>NUCLEOTIDE SEQUENCE [LARGE SCALE GENOMIC DNA]</scope>
    <source>
        <strain>K12 / DH10B</strain>
    </source>
</reference>
<evidence type="ECO:0000255" key="1">
    <source>
        <dbReference type="HAMAP-Rule" id="MF_00108"/>
    </source>
</evidence>